<dbReference type="EMBL" id="KQ139872">
    <property type="protein sequence ID" value="KNA19821.1"/>
    <property type="molecule type" value="Genomic_DNA"/>
</dbReference>
<dbReference type="EMBL" id="AF250923">
    <property type="protein sequence ID" value="AAF64313.1"/>
    <property type="molecule type" value="mRNA"/>
</dbReference>
<dbReference type="PDB" id="4V61">
    <property type="method" value="EM"/>
    <property type="resolution" value="9.40 A"/>
    <property type="chains" value="BH=39-258"/>
</dbReference>
<dbReference type="PDB" id="5H1S">
    <property type="method" value="EM"/>
    <property type="resolution" value="3.50 A"/>
    <property type="chains" value="H=39-258"/>
</dbReference>
<dbReference type="PDB" id="5MLC">
    <property type="method" value="EM"/>
    <property type="resolution" value="3.90 A"/>
    <property type="chains" value="G=39-258"/>
</dbReference>
<dbReference type="PDB" id="5MMI">
    <property type="method" value="EM"/>
    <property type="resolution" value="3.25 A"/>
    <property type="chains" value="F=1-258"/>
</dbReference>
<dbReference type="PDB" id="5MMM">
    <property type="method" value="EM"/>
    <property type="resolution" value="3.40 A"/>
    <property type="chains" value="F=1-258"/>
</dbReference>
<dbReference type="PDB" id="5X8P">
    <property type="method" value="EM"/>
    <property type="resolution" value="3.40 A"/>
    <property type="chains" value="F=39-258"/>
</dbReference>
<dbReference type="PDB" id="5X8T">
    <property type="method" value="EM"/>
    <property type="resolution" value="3.30 A"/>
    <property type="chains" value="F=39-258"/>
</dbReference>
<dbReference type="PDB" id="6ERI">
    <property type="method" value="EM"/>
    <property type="resolution" value="3.00 A"/>
    <property type="chains" value="AF=52-258"/>
</dbReference>
<dbReference type="PDBsum" id="4V61"/>
<dbReference type="PDBsum" id="5H1S"/>
<dbReference type="PDBsum" id="5MLC"/>
<dbReference type="PDBsum" id="5MMI"/>
<dbReference type="PDBsum" id="5MMM"/>
<dbReference type="PDBsum" id="5X8P"/>
<dbReference type="PDBsum" id="5X8T"/>
<dbReference type="PDBsum" id="6ERI"/>
<dbReference type="EMDB" id="EMD-3525"/>
<dbReference type="EMDB" id="EMD-3531"/>
<dbReference type="EMDB" id="EMD-3533"/>
<dbReference type="EMDB" id="EMD-3941"/>
<dbReference type="EMDB" id="EMD-6709"/>
<dbReference type="EMDB" id="EMD-6711"/>
<dbReference type="EMDB" id="EMD-9572"/>
<dbReference type="SMR" id="P82192"/>
<dbReference type="IntAct" id="P82192">
    <property type="interactions" value="1"/>
</dbReference>
<dbReference type="STRING" id="3562.P82192"/>
<dbReference type="Proteomes" id="UP001155700">
    <property type="component" value="Unplaced"/>
</dbReference>
<dbReference type="GO" id="GO:0009507">
    <property type="term" value="C:chloroplast"/>
    <property type="evidence" value="ECO:0007669"/>
    <property type="project" value="UniProtKB-SubCell"/>
</dbReference>
<dbReference type="GO" id="GO:1990904">
    <property type="term" value="C:ribonucleoprotein complex"/>
    <property type="evidence" value="ECO:0007669"/>
    <property type="project" value="UniProtKB-KW"/>
</dbReference>
<dbReference type="GO" id="GO:0005840">
    <property type="term" value="C:ribosome"/>
    <property type="evidence" value="ECO:0007669"/>
    <property type="project" value="UniProtKB-KW"/>
</dbReference>
<dbReference type="GO" id="GO:0003723">
    <property type="term" value="F:RNA binding"/>
    <property type="evidence" value="ECO:0000318"/>
    <property type="project" value="GO_Central"/>
</dbReference>
<dbReference type="GO" id="GO:0019843">
    <property type="term" value="F:rRNA binding"/>
    <property type="evidence" value="ECO:0007669"/>
    <property type="project" value="UniProtKB-KW"/>
</dbReference>
<dbReference type="GO" id="GO:0003735">
    <property type="term" value="F:structural constituent of ribosome"/>
    <property type="evidence" value="ECO:0000318"/>
    <property type="project" value="GO_Central"/>
</dbReference>
<dbReference type="GO" id="GO:0006412">
    <property type="term" value="P:translation"/>
    <property type="evidence" value="ECO:0000318"/>
    <property type="project" value="GO_Central"/>
</dbReference>
<dbReference type="FunFam" id="3.30.1440.10:FF:000001">
    <property type="entry name" value="50S ribosomal protein L5"/>
    <property type="match status" value="1"/>
</dbReference>
<dbReference type="Gene3D" id="3.30.1440.10">
    <property type="match status" value="1"/>
</dbReference>
<dbReference type="HAMAP" id="MF_01333_B">
    <property type="entry name" value="Ribosomal_uL5_B"/>
    <property type="match status" value="1"/>
</dbReference>
<dbReference type="InterPro" id="IPR002132">
    <property type="entry name" value="Ribosomal_uL5"/>
</dbReference>
<dbReference type="InterPro" id="IPR020930">
    <property type="entry name" value="Ribosomal_uL5_bac-type"/>
</dbReference>
<dbReference type="InterPro" id="IPR031309">
    <property type="entry name" value="Ribosomal_uL5_C"/>
</dbReference>
<dbReference type="InterPro" id="IPR020929">
    <property type="entry name" value="Ribosomal_uL5_CS"/>
</dbReference>
<dbReference type="InterPro" id="IPR022803">
    <property type="entry name" value="Ribosomal_uL5_dom_sf"/>
</dbReference>
<dbReference type="InterPro" id="IPR031310">
    <property type="entry name" value="Ribosomal_uL5_N"/>
</dbReference>
<dbReference type="NCBIfam" id="NF000585">
    <property type="entry name" value="PRK00010.1"/>
    <property type="match status" value="1"/>
</dbReference>
<dbReference type="PANTHER" id="PTHR11994">
    <property type="entry name" value="60S RIBOSOMAL PROTEIN L11-RELATED"/>
    <property type="match status" value="1"/>
</dbReference>
<dbReference type="Pfam" id="PF00281">
    <property type="entry name" value="Ribosomal_L5"/>
    <property type="match status" value="1"/>
</dbReference>
<dbReference type="Pfam" id="PF00673">
    <property type="entry name" value="Ribosomal_L5_C"/>
    <property type="match status" value="1"/>
</dbReference>
<dbReference type="SUPFAM" id="SSF55282">
    <property type="entry name" value="RL5-like"/>
    <property type="match status" value="1"/>
</dbReference>
<dbReference type="PROSITE" id="PS00358">
    <property type="entry name" value="RIBOSOMAL_L5"/>
    <property type="match status" value="1"/>
</dbReference>
<feature type="transit peptide" description="Chloroplast" evidence="1">
    <location>
        <begin position="1"/>
        <end position="38"/>
    </location>
</feature>
<feature type="chain" id="PRO_0000125048" description="Large ribosomal subunit protein uL5c">
    <location>
        <begin position="39"/>
        <end position="258"/>
    </location>
</feature>
<feature type="turn" evidence="9">
    <location>
        <begin position="44"/>
        <end position="46"/>
    </location>
</feature>
<feature type="strand" evidence="9">
    <location>
        <begin position="47"/>
        <end position="50"/>
    </location>
</feature>
<feature type="helix" evidence="9">
    <location>
        <begin position="53"/>
        <end position="63"/>
    </location>
</feature>
<feature type="helix" evidence="9">
    <location>
        <begin position="65"/>
        <end position="73"/>
    </location>
</feature>
<feature type="helix" evidence="9">
    <location>
        <begin position="78"/>
        <end position="80"/>
    </location>
</feature>
<feature type="strand" evidence="9">
    <location>
        <begin position="84"/>
        <end position="91"/>
    </location>
</feature>
<feature type="helix" evidence="9">
    <location>
        <begin position="95"/>
        <end position="97"/>
    </location>
</feature>
<feature type="helix" evidence="9">
    <location>
        <begin position="100"/>
        <end position="114"/>
    </location>
</feature>
<feature type="turn" evidence="9">
    <location>
        <begin position="128"/>
        <end position="131"/>
    </location>
</feature>
<feature type="strand" evidence="9">
    <location>
        <begin position="140"/>
        <end position="145"/>
    </location>
</feature>
<feature type="helix" evidence="9">
    <location>
        <begin position="146"/>
        <end position="157"/>
    </location>
</feature>
<feature type="turn" evidence="9">
    <location>
        <begin position="158"/>
        <end position="163"/>
    </location>
</feature>
<feature type="strand" evidence="9">
    <location>
        <begin position="164"/>
        <end position="166"/>
    </location>
</feature>
<feature type="strand" evidence="8">
    <location>
        <begin position="172"/>
        <end position="175"/>
    </location>
</feature>
<feature type="strand" evidence="9">
    <location>
        <begin position="177"/>
        <end position="179"/>
    </location>
</feature>
<feature type="strand" evidence="9">
    <location>
        <begin position="181"/>
        <end position="186"/>
    </location>
</feature>
<feature type="strand" evidence="8">
    <location>
        <begin position="192"/>
        <end position="194"/>
    </location>
</feature>
<feature type="turn" evidence="9">
    <location>
        <begin position="196"/>
        <end position="198"/>
    </location>
</feature>
<feature type="strand" evidence="9">
    <location>
        <begin position="205"/>
        <end position="212"/>
    </location>
</feature>
<feature type="helix" evidence="9">
    <location>
        <begin position="216"/>
        <end position="225"/>
    </location>
</feature>
<sequence length="258" mass="28140">MASTSLLQSTSSSFAGVRFHCRTSAAPRVGLSSFTVKAAAGTAVFVDKAEAETINRLKTNYIEKMVPLLKEEFSYSNILEVPKVVKIVVNCGIGDASQNAKGLDAAINELALITGQRPVKTKAKTSIAGFKVREGMTLGIAVTLRGNLMYSFLDRLINLALPRTRDFQGVNPNSFDGHGNYSVGFREQSVFPEIKPEIVGKARGMDVCITTTAKTDKEAYKLLSLMGMPFREGSGPSTLVRKKKLKSHHFDAKKGRRY</sequence>
<organism>
    <name type="scientific">Spinacia oleracea</name>
    <name type="common">Spinach</name>
    <dbReference type="NCBI Taxonomy" id="3562"/>
    <lineage>
        <taxon>Eukaryota</taxon>
        <taxon>Viridiplantae</taxon>
        <taxon>Streptophyta</taxon>
        <taxon>Embryophyta</taxon>
        <taxon>Tracheophyta</taxon>
        <taxon>Spermatophyta</taxon>
        <taxon>Magnoliopsida</taxon>
        <taxon>eudicotyledons</taxon>
        <taxon>Gunneridae</taxon>
        <taxon>Pentapetalae</taxon>
        <taxon>Caryophyllales</taxon>
        <taxon>Chenopodiaceae</taxon>
        <taxon>Chenopodioideae</taxon>
        <taxon>Anserineae</taxon>
        <taxon>Spinacia</taxon>
    </lineage>
</organism>
<comment type="function">
    <text evidence="6 7">Component of the chloroplast ribosome (chloro-ribosome), a dedicated translation machinery responsible for the synthesis of chloroplast genome-encoded proteins, including proteins of the transcription and translation machinery and components of the photosynthetic apparatus.</text>
</comment>
<comment type="subunit">
    <text evidence="1 2">Component of the chloroplast large ribosomal subunit (LSU). Mature 70S chloroplast ribosomes of higher plants consist of a small (30S) and a large (50S) subunit. The 30S small subunit contains 1 molecule of ribosomal RNA (16S rRNA) and 24 different proteins. The 50S large subunit contains 3 rRNA molecules (23S, 5S and 4.5S rRNA) and 33 different proteins.</text>
</comment>
<comment type="subcellular location">
    <subcellularLocation>
        <location evidence="1">Plastid</location>
        <location evidence="1">Chloroplast</location>
    </subcellularLocation>
</comment>
<comment type="mass spectrometry" mass="24207.8" method="Electrospray" evidence="1"/>
<comment type="similarity">
    <text evidence="5">Belongs to the universal ribosomal protein uL5 family.</text>
</comment>
<proteinExistence type="evidence at protein level"/>
<accession>P82192</accession>
<accession>A0A0K9RJX4</accession>
<accession>Q9M4W0</accession>
<keyword id="KW-0002">3D-structure</keyword>
<keyword id="KW-0150">Chloroplast</keyword>
<keyword id="KW-0903">Direct protein sequencing</keyword>
<keyword id="KW-0934">Plastid</keyword>
<keyword id="KW-1185">Reference proteome</keyword>
<keyword id="KW-0687">Ribonucleoprotein</keyword>
<keyword id="KW-0689">Ribosomal protein</keyword>
<keyword id="KW-0694">RNA-binding</keyword>
<keyword id="KW-0699">rRNA-binding</keyword>
<keyword id="KW-0809">Transit peptide</keyword>
<protein>
    <recommendedName>
        <fullName evidence="4">Large ribosomal subunit protein uL5c</fullName>
    </recommendedName>
    <alternativeName>
        <fullName evidence="3">50S ribosomal protein L5, chloroplastic</fullName>
    </alternativeName>
</protein>
<reference key="1">
    <citation type="journal article" date="2014" name="Nature">
        <title>The genome of the recently domesticated crop plant sugar beet (Beta vulgaris).</title>
        <authorList>
            <person name="Dohm J.C."/>
            <person name="Minoche A.E."/>
            <person name="Holtgraewe D."/>
            <person name="Capella-Gutierrez S."/>
            <person name="Zakrzewski F."/>
            <person name="Tafer H."/>
            <person name="Rupp O."/>
            <person name="Soerensen T.R."/>
            <person name="Stracke R."/>
            <person name="Reinhardt R."/>
            <person name="Goesmann A."/>
            <person name="Kraft T."/>
            <person name="Schulz B."/>
            <person name="Stadler P.F."/>
            <person name="Schmidt T."/>
            <person name="Gabaldon T."/>
            <person name="Lehrach H."/>
            <person name="Weisshaar B."/>
            <person name="Himmelbauer H."/>
        </authorList>
    </citation>
    <scope>NUCLEOTIDE SEQUENCE [LARGE SCALE GENOMIC DNA]</scope>
    <source>
        <strain>cv. Viroflay</strain>
        <tissue>Leaf</tissue>
    </source>
</reference>
<reference key="2">
    <citation type="journal article" date="2000" name="J. Biol. Chem.">
        <title>The plastid ribosomal proteins. Identification of all the proteins in the 50S subunit of an organelle ribosome (chloroplast).</title>
        <authorList>
            <person name="Yamaguchi K."/>
            <person name="Subramanian A.R."/>
        </authorList>
    </citation>
    <scope>NUCLEOTIDE SEQUENCE [MRNA] OF 52-258</scope>
    <scope>PROTEIN SEQUENCE OF 39-63</scope>
    <scope>SUBUNIT</scope>
    <scope>SUBCELLULAR LOCATION</scope>
    <scope>MASS SPECTROMETRY</scope>
    <source>
        <strain>cv. Alwaro</strain>
        <tissue>Leaf</tissue>
    </source>
</reference>
<reference key="3">
    <citation type="journal article" date="2007" name="Proc. Natl. Acad. Sci. U.S.A.">
        <title>Cryo-EM study of the spinach chloroplast ribosome reveals the structural and functional roles of plastid-specific ribosomal proteins.</title>
        <authorList>
            <person name="Sharma M.R."/>
            <person name="Wilson D.N."/>
            <person name="Datta P.P."/>
            <person name="Barat C."/>
            <person name="Schluenzen F."/>
            <person name="Fucini P."/>
            <person name="Agrawal R.K."/>
        </authorList>
    </citation>
    <scope>STRUCTURE BY ELECTRON MICROSCOPY (9.4 ANGSTROMS)</scope>
</reference>
<reference key="4">
    <citation type="journal article" date="2016" name="Sci. Rep.">
        <title>Cryo-EM structure of the large subunit of the spinach chloroplast ribosome.</title>
        <authorList>
            <person name="Ahmed T."/>
            <person name="Yin Z."/>
            <person name="Bhushan S."/>
        </authorList>
    </citation>
    <scope>STRUCTURE BY ELECTRON MICROSCOPY (3.50 ANGSTROMS)</scope>
</reference>
<reference key="5">
    <citation type="journal article" date="2017" name="EMBO J.">
        <title>The complete structure of the chloroplast 70S ribosome in complex with translation factor pY.</title>
        <authorList>
            <person name="Bieri P."/>
            <person name="Leibundgut M."/>
            <person name="Saurer M."/>
            <person name="Boehringer D."/>
            <person name="Ban N."/>
        </authorList>
    </citation>
    <scope>STRUCTURE BY ELECTRON MICROSCOPY (3.25 ANGSTROMS)</scope>
    <scope>SUBUNIT</scope>
    <scope>SUBCELLULAR LOCATION</scope>
</reference>
<evidence type="ECO:0000269" key="1">
    <source>
    </source>
</evidence>
<evidence type="ECO:0000269" key="2">
    <source>
    </source>
</evidence>
<evidence type="ECO:0000303" key="3">
    <source>
    </source>
</evidence>
<evidence type="ECO:0000303" key="4">
    <source>
    </source>
</evidence>
<evidence type="ECO:0000305" key="5"/>
<evidence type="ECO:0000305" key="6">
    <source>
    </source>
</evidence>
<evidence type="ECO:0000305" key="7">
    <source>
    </source>
</evidence>
<evidence type="ECO:0007829" key="8">
    <source>
        <dbReference type="PDB" id="5H1S"/>
    </source>
</evidence>
<evidence type="ECO:0007829" key="9">
    <source>
        <dbReference type="PDB" id="5MMI"/>
    </source>
</evidence>
<gene>
    <name type="primary">RPL5</name>
    <name type="synonym">PrpL5</name>
    <name type="ORF">SOVF_057730</name>
</gene>
<name>RK5_SPIOL</name>